<proteinExistence type="inferred from homology"/>
<evidence type="ECO:0000255" key="1">
    <source>
        <dbReference type="HAMAP-Rule" id="MF_01850"/>
    </source>
</evidence>
<reference key="1">
    <citation type="journal article" date="2010" name="PLoS ONE">
        <title>The complete multipartite genome sequence of Cupriavidus necator JMP134, a versatile pollutant degrader.</title>
        <authorList>
            <person name="Lykidis A."/>
            <person name="Perez-Pantoja D."/>
            <person name="Ledger T."/>
            <person name="Mavromatis K."/>
            <person name="Anderson I.J."/>
            <person name="Ivanova N.N."/>
            <person name="Hooper S.D."/>
            <person name="Lapidus A."/>
            <person name="Lucas S."/>
            <person name="Gonzalez B."/>
            <person name="Kyrpides N.C."/>
        </authorList>
    </citation>
    <scope>NUCLEOTIDE SEQUENCE [LARGE SCALE GENOMIC DNA]</scope>
    <source>
        <strain>JMP134 / LMG 1197</strain>
    </source>
</reference>
<feature type="chain" id="PRO_0000348811" description="tRNA-cytidine(32) 2-sulfurtransferase">
    <location>
        <begin position="1"/>
        <end position="312"/>
    </location>
</feature>
<feature type="short sequence motif" description="PP-loop motif" evidence="1">
    <location>
        <begin position="39"/>
        <end position="44"/>
    </location>
</feature>
<feature type="binding site" evidence="1">
    <location>
        <position position="114"/>
    </location>
    <ligand>
        <name>[4Fe-4S] cluster</name>
        <dbReference type="ChEBI" id="CHEBI:49883"/>
    </ligand>
</feature>
<feature type="binding site" evidence="1">
    <location>
        <position position="117"/>
    </location>
    <ligand>
        <name>[4Fe-4S] cluster</name>
        <dbReference type="ChEBI" id="CHEBI:49883"/>
    </ligand>
</feature>
<feature type="binding site" evidence="1">
    <location>
        <position position="205"/>
    </location>
    <ligand>
        <name>[4Fe-4S] cluster</name>
        <dbReference type="ChEBI" id="CHEBI:49883"/>
    </ligand>
</feature>
<comment type="function">
    <text evidence="1">Catalyzes the ATP-dependent 2-thiolation of cytidine in position 32 of tRNA, to form 2-thiocytidine (s(2)C32). The sulfur atoms are provided by the cysteine/cysteine desulfurase (IscS) system.</text>
</comment>
<comment type="catalytic activity">
    <reaction evidence="1">
        <text>cytidine(32) in tRNA + S-sulfanyl-L-cysteinyl-[cysteine desulfurase] + AH2 + ATP = 2-thiocytidine(32) in tRNA + L-cysteinyl-[cysteine desulfurase] + A + AMP + diphosphate + H(+)</text>
        <dbReference type="Rhea" id="RHEA:57048"/>
        <dbReference type="Rhea" id="RHEA-COMP:10288"/>
        <dbReference type="Rhea" id="RHEA-COMP:12157"/>
        <dbReference type="Rhea" id="RHEA-COMP:12158"/>
        <dbReference type="Rhea" id="RHEA-COMP:14821"/>
        <dbReference type="ChEBI" id="CHEBI:13193"/>
        <dbReference type="ChEBI" id="CHEBI:15378"/>
        <dbReference type="ChEBI" id="CHEBI:17499"/>
        <dbReference type="ChEBI" id="CHEBI:29950"/>
        <dbReference type="ChEBI" id="CHEBI:30616"/>
        <dbReference type="ChEBI" id="CHEBI:33019"/>
        <dbReference type="ChEBI" id="CHEBI:61963"/>
        <dbReference type="ChEBI" id="CHEBI:82748"/>
        <dbReference type="ChEBI" id="CHEBI:141453"/>
        <dbReference type="ChEBI" id="CHEBI:456215"/>
    </reaction>
    <physiologicalReaction direction="left-to-right" evidence="1">
        <dbReference type="Rhea" id="RHEA:57049"/>
    </physiologicalReaction>
</comment>
<comment type="cofactor">
    <cofactor evidence="1">
        <name>Mg(2+)</name>
        <dbReference type="ChEBI" id="CHEBI:18420"/>
    </cofactor>
</comment>
<comment type="cofactor">
    <cofactor evidence="1">
        <name>[4Fe-4S] cluster</name>
        <dbReference type="ChEBI" id="CHEBI:49883"/>
    </cofactor>
    <text evidence="1">Binds 1 [4Fe-4S] cluster per subunit. The cluster is chelated by three Cys residues, the fourth Fe has a free coordination site that may bind a sulfur atom transferred from the persulfide of IscS.</text>
</comment>
<comment type="pathway">
    <text evidence="1">tRNA modification.</text>
</comment>
<comment type="subunit">
    <text evidence="1">Homodimer.</text>
</comment>
<comment type="subcellular location">
    <subcellularLocation>
        <location evidence="1">Cytoplasm</location>
    </subcellularLocation>
</comment>
<comment type="miscellaneous">
    <text evidence="1">The thiolation reaction likely consists of two steps: a first activation step by ATP to form an adenylated intermediate of the target base of tRNA, and a second nucleophilic substitution step of the sulfur (S) atom supplied by the hydrosulfide attached to the Fe-S cluster.</text>
</comment>
<comment type="similarity">
    <text evidence="1">Belongs to the TtcA family.</text>
</comment>
<gene>
    <name evidence="1" type="primary">ttcA</name>
    <name type="ordered locus">Reut_A0227</name>
</gene>
<keyword id="KW-0004">4Fe-4S</keyword>
<keyword id="KW-0067">ATP-binding</keyword>
<keyword id="KW-0963">Cytoplasm</keyword>
<keyword id="KW-0408">Iron</keyword>
<keyword id="KW-0411">Iron-sulfur</keyword>
<keyword id="KW-0460">Magnesium</keyword>
<keyword id="KW-0479">Metal-binding</keyword>
<keyword id="KW-0547">Nucleotide-binding</keyword>
<keyword id="KW-0694">RNA-binding</keyword>
<keyword id="KW-0808">Transferase</keyword>
<keyword id="KW-0819">tRNA processing</keyword>
<keyword id="KW-0820">tRNA-binding</keyword>
<protein>
    <recommendedName>
        <fullName evidence="1">tRNA-cytidine(32) 2-sulfurtransferase</fullName>
        <ecNumber evidence="1">2.8.1.-</ecNumber>
    </recommendedName>
    <alternativeName>
        <fullName evidence="1">Two-thiocytidine biosynthesis protein A</fullName>
    </alternativeName>
    <alternativeName>
        <fullName evidence="1">tRNA 2-thiocytidine biosynthesis protein TtcA</fullName>
    </alternativeName>
</protein>
<name>TTCA_CUPPJ</name>
<dbReference type="EC" id="2.8.1.-" evidence="1"/>
<dbReference type="EMBL" id="CP000090">
    <property type="protein sequence ID" value="AAZ59609.1"/>
    <property type="molecule type" value="Genomic_DNA"/>
</dbReference>
<dbReference type="SMR" id="Q476S4"/>
<dbReference type="STRING" id="264198.Reut_A0227"/>
<dbReference type="KEGG" id="reu:Reut_A0227"/>
<dbReference type="eggNOG" id="COG0037">
    <property type="taxonomic scope" value="Bacteria"/>
</dbReference>
<dbReference type="HOGENOM" id="CLU_026481_0_0_4"/>
<dbReference type="OrthoDB" id="9801054at2"/>
<dbReference type="GO" id="GO:0005737">
    <property type="term" value="C:cytoplasm"/>
    <property type="evidence" value="ECO:0007669"/>
    <property type="project" value="UniProtKB-SubCell"/>
</dbReference>
<dbReference type="GO" id="GO:0051539">
    <property type="term" value="F:4 iron, 4 sulfur cluster binding"/>
    <property type="evidence" value="ECO:0007669"/>
    <property type="project" value="UniProtKB-UniRule"/>
</dbReference>
<dbReference type="GO" id="GO:0005524">
    <property type="term" value="F:ATP binding"/>
    <property type="evidence" value="ECO:0007669"/>
    <property type="project" value="UniProtKB-UniRule"/>
</dbReference>
<dbReference type="GO" id="GO:0000287">
    <property type="term" value="F:magnesium ion binding"/>
    <property type="evidence" value="ECO:0007669"/>
    <property type="project" value="UniProtKB-UniRule"/>
</dbReference>
<dbReference type="GO" id="GO:0016783">
    <property type="term" value="F:sulfurtransferase activity"/>
    <property type="evidence" value="ECO:0007669"/>
    <property type="project" value="UniProtKB-UniRule"/>
</dbReference>
<dbReference type="GO" id="GO:0000049">
    <property type="term" value="F:tRNA binding"/>
    <property type="evidence" value="ECO:0007669"/>
    <property type="project" value="UniProtKB-KW"/>
</dbReference>
<dbReference type="GO" id="GO:0034227">
    <property type="term" value="P:tRNA thio-modification"/>
    <property type="evidence" value="ECO:0007669"/>
    <property type="project" value="UniProtKB-UniRule"/>
</dbReference>
<dbReference type="CDD" id="cd24138">
    <property type="entry name" value="TtcA-like"/>
    <property type="match status" value="1"/>
</dbReference>
<dbReference type="Gene3D" id="3.40.50.620">
    <property type="entry name" value="HUPs"/>
    <property type="match status" value="1"/>
</dbReference>
<dbReference type="HAMAP" id="MF_01850">
    <property type="entry name" value="TtcA"/>
    <property type="match status" value="1"/>
</dbReference>
<dbReference type="InterPro" id="IPR014729">
    <property type="entry name" value="Rossmann-like_a/b/a_fold"/>
</dbReference>
<dbReference type="InterPro" id="IPR011063">
    <property type="entry name" value="TilS/TtcA_N"/>
</dbReference>
<dbReference type="InterPro" id="IPR012089">
    <property type="entry name" value="tRNA_Cyd_32_2_STrfase"/>
</dbReference>
<dbReference type="NCBIfam" id="NF007972">
    <property type="entry name" value="PRK10696.1"/>
    <property type="match status" value="1"/>
</dbReference>
<dbReference type="PANTHER" id="PTHR43686:SF1">
    <property type="entry name" value="AMINOTRAN_5 DOMAIN-CONTAINING PROTEIN"/>
    <property type="match status" value="1"/>
</dbReference>
<dbReference type="PANTHER" id="PTHR43686">
    <property type="entry name" value="SULFURTRANSFERASE-RELATED"/>
    <property type="match status" value="1"/>
</dbReference>
<dbReference type="Pfam" id="PF01171">
    <property type="entry name" value="ATP_bind_3"/>
    <property type="match status" value="1"/>
</dbReference>
<dbReference type="SUPFAM" id="SSF52402">
    <property type="entry name" value="Adenine nucleotide alpha hydrolases-like"/>
    <property type="match status" value="1"/>
</dbReference>
<sequence length="312" mass="34742">MSHSNNFYRLETRLQSQTGKAIGDFGMIEDGDTVLVCMSGGKDSYTMLSVLMALQKRAPIQFKLIAMNLDQKQPGFPEHVLPEYLKSTGVEYVIVEADTYSIVKEKVPEGKTTCSLCSRLRRGVIYRTAKELGANKIALGHHRDDIVNTFFLNMFFGGKMKAMPPKLATDDGAHIVIRPLAYCSEKDIAAYARAMEFPIIPCNLCGSQENLQRKKVSEMLQAWERENPGRIDNIFASLRNVVPSHLADTDLFPFTGLATGLAKVDEASLFGETTFTQQPLVFAGSSDENRLEFVRFERPPQTSATVQQASIE</sequence>
<accession>Q476S4</accession>
<organism>
    <name type="scientific">Cupriavidus pinatubonensis (strain JMP 134 / LMG 1197)</name>
    <name type="common">Cupriavidus necator (strain JMP 134)</name>
    <dbReference type="NCBI Taxonomy" id="264198"/>
    <lineage>
        <taxon>Bacteria</taxon>
        <taxon>Pseudomonadati</taxon>
        <taxon>Pseudomonadota</taxon>
        <taxon>Betaproteobacteria</taxon>
        <taxon>Burkholderiales</taxon>
        <taxon>Burkholderiaceae</taxon>
        <taxon>Cupriavidus</taxon>
    </lineage>
</organism>